<keyword id="KW-0456">Lyase</keyword>
<proteinExistence type="inferred from homology"/>
<name>MGSA_HAEIE</name>
<evidence type="ECO:0000255" key="1">
    <source>
        <dbReference type="HAMAP-Rule" id="MF_00549"/>
    </source>
</evidence>
<protein>
    <recommendedName>
        <fullName evidence="1">Methylglyoxal synthase</fullName>
        <shortName evidence="1">MGS</shortName>
        <ecNumber evidence="1">4.2.3.3</ecNumber>
    </recommendedName>
</protein>
<organism>
    <name type="scientific">Haemophilus influenzae (strain PittEE)</name>
    <dbReference type="NCBI Taxonomy" id="374930"/>
    <lineage>
        <taxon>Bacteria</taxon>
        <taxon>Pseudomonadati</taxon>
        <taxon>Pseudomonadota</taxon>
        <taxon>Gammaproteobacteria</taxon>
        <taxon>Pasteurellales</taxon>
        <taxon>Pasteurellaceae</taxon>
        <taxon>Haemophilus</taxon>
    </lineage>
</organism>
<reference key="1">
    <citation type="journal article" date="2007" name="Genome Biol.">
        <title>Characterization and modeling of the Haemophilus influenzae core and supragenomes based on the complete genomic sequences of Rd and 12 clinical nontypeable strains.</title>
        <authorList>
            <person name="Hogg J.S."/>
            <person name="Hu F.Z."/>
            <person name="Janto B."/>
            <person name="Boissy R."/>
            <person name="Hayes J."/>
            <person name="Keefe R."/>
            <person name="Post J.C."/>
            <person name="Ehrlich G.D."/>
        </authorList>
    </citation>
    <scope>NUCLEOTIDE SEQUENCE [LARGE SCALE GENOMIC DNA]</scope>
    <source>
        <strain>PittEE</strain>
    </source>
</reference>
<sequence>MQTTTRTLTQHKRIALVAHDSCKKNLLNWTQKHKEALKPHILYATGTTGHILERETGLSIQSLLSGPMGGDQQLGGLIAEKKIDMMIFFWDPMNAAPHDPDVKALMRIATVWNIPVAINQSSADFLLTSVLFEQDVEIDVPDYEGYLKERLA</sequence>
<accession>A5UBP8</accession>
<comment type="function">
    <text evidence="1">Catalyzes the formation of methylglyoxal from dihydroxyacetone phosphate.</text>
</comment>
<comment type="catalytic activity">
    <reaction evidence="1">
        <text>dihydroxyacetone phosphate = methylglyoxal + phosphate</text>
        <dbReference type="Rhea" id="RHEA:17937"/>
        <dbReference type="ChEBI" id="CHEBI:17158"/>
        <dbReference type="ChEBI" id="CHEBI:43474"/>
        <dbReference type="ChEBI" id="CHEBI:57642"/>
        <dbReference type="EC" id="4.2.3.3"/>
    </reaction>
</comment>
<comment type="similarity">
    <text evidence="1">Belongs to the methylglyoxal synthase family.</text>
</comment>
<gene>
    <name evidence="1" type="primary">mgsA</name>
    <name type="ordered locus">CGSHiEE_03910</name>
</gene>
<feature type="chain" id="PRO_1000017811" description="Methylglyoxal synthase">
    <location>
        <begin position="1"/>
        <end position="152"/>
    </location>
</feature>
<feature type="domain" description="MGS-like" evidence="1">
    <location>
        <begin position="6"/>
        <end position="152"/>
    </location>
</feature>
<feature type="active site" description="Proton donor/acceptor" evidence="1">
    <location>
        <position position="71"/>
    </location>
</feature>
<feature type="binding site" evidence="1">
    <location>
        <position position="19"/>
    </location>
    <ligand>
        <name>substrate</name>
    </ligand>
</feature>
<feature type="binding site" evidence="1">
    <location>
        <position position="23"/>
    </location>
    <ligand>
        <name>substrate</name>
    </ligand>
</feature>
<feature type="binding site" evidence="1">
    <location>
        <begin position="45"/>
        <end position="48"/>
    </location>
    <ligand>
        <name>substrate</name>
    </ligand>
</feature>
<feature type="binding site" evidence="1">
    <location>
        <begin position="65"/>
        <end position="66"/>
    </location>
    <ligand>
        <name>substrate</name>
    </ligand>
</feature>
<feature type="binding site" evidence="1">
    <location>
        <position position="98"/>
    </location>
    <ligand>
        <name>substrate</name>
    </ligand>
</feature>
<dbReference type="EC" id="4.2.3.3" evidence="1"/>
<dbReference type="EMBL" id="CP000671">
    <property type="protein sequence ID" value="ABQ98199.1"/>
    <property type="molecule type" value="Genomic_DNA"/>
</dbReference>
<dbReference type="SMR" id="A5UBP8"/>
<dbReference type="KEGG" id="hip:CGSHiEE_03910"/>
<dbReference type="HOGENOM" id="CLU_120420_0_1_6"/>
<dbReference type="GO" id="GO:0005829">
    <property type="term" value="C:cytosol"/>
    <property type="evidence" value="ECO:0007669"/>
    <property type="project" value="TreeGrafter"/>
</dbReference>
<dbReference type="GO" id="GO:0008929">
    <property type="term" value="F:methylglyoxal synthase activity"/>
    <property type="evidence" value="ECO:0007669"/>
    <property type="project" value="UniProtKB-UniRule"/>
</dbReference>
<dbReference type="GO" id="GO:0019242">
    <property type="term" value="P:methylglyoxal biosynthetic process"/>
    <property type="evidence" value="ECO:0007669"/>
    <property type="project" value="UniProtKB-UniRule"/>
</dbReference>
<dbReference type="CDD" id="cd01422">
    <property type="entry name" value="MGS"/>
    <property type="match status" value="1"/>
</dbReference>
<dbReference type="FunFam" id="3.40.50.1380:FF:000002">
    <property type="entry name" value="Methylglyoxal synthase"/>
    <property type="match status" value="1"/>
</dbReference>
<dbReference type="Gene3D" id="3.40.50.1380">
    <property type="entry name" value="Methylglyoxal synthase-like domain"/>
    <property type="match status" value="1"/>
</dbReference>
<dbReference type="HAMAP" id="MF_00549">
    <property type="entry name" value="Methylglyoxal_synth"/>
    <property type="match status" value="1"/>
</dbReference>
<dbReference type="InterPro" id="IPR004363">
    <property type="entry name" value="Methylgl_synth"/>
</dbReference>
<dbReference type="InterPro" id="IPR018148">
    <property type="entry name" value="Methylglyoxal_synth_AS"/>
</dbReference>
<dbReference type="InterPro" id="IPR011607">
    <property type="entry name" value="MGS-like_dom"/>
</dbReference>
<dbReference type="InterPro" id="IPR036914">
    <property type="entry name" value="MGS-like_dom_sf"/>
</dbReference>
<dbReference type="NCBIfam" id="TIGR00160">
    <property type="entry name" value="MGSA"/>
    <property type="match status" value="1"/>
</dbReference>
<dbReference type="NCBIfam" id="NF003559">
    <property type="entry name" value="PRK05234.1"/>
    <property type="match status" value="1"/>
</dbReference>
<dbReference type="PANTHER" id="PTHR30492">
    <property type="entry name" value="METHYLGLYOXAL SYNTHASE"/>
    <property type="match status" value="1"/>
</dbReference>
<dbReference type="PANTHER" id="PTHR30492:SF0">
    <property type="entry name" value="METHYLGLYOXAL SYNTHASE"/>
    <property type="match status" value="1"/>
</dbReference>
<dbReference type="Pfam" id="PF02142">
    <property type="entry name" value="MGS"/>
    <property type="match status" value="1"/>
</dbReference>
<dbReference type="PIRSF" id="PIRSF006614">
    <property type="entry name" value="Methylglyox_syn"/>
    <property type="match status" value="1"/>
</dbReference>
<dbReference type="SMART" id="SM00851">
    <property type="entry name" value="MGS"/>
    <property type="match status" value="1"/>
</dbReference>
<dbReference type="SUPFAM" id="SSF52335">
    <property type="entry name" value="Methylglyoxal synthase-like"/>
    <property type="match status" value="1"/>
</dbReference>
<dbReference type="PROSITE" id="PS01335">
    <property type="entry name" value="METHYLGLYOXAL_SYNTH"/>
    <property type="match status" value="1"/>
</dbReference>
<dbReference type="PROSITE" id="PS51855">
    <property type="entry name" value="MGS"/>
    <property type="match status" value="1"/>
</dbReference>